<name>RL14_STRE4</name>
<feature type="chain" id="PRO_1000166938" description="Large ribosomal subunit protein uL14">
    <location>
        <begin position="1"/>
        <end position="122"/>
    </location>
</feature>
<sequence>MIQQETRLKVADNSGAREILTIKVLGGSGRKFANIGDVIVASVKQATPGGAVKKGDVVKAVIVRTKSGARRPDGSYIKFDDNAAVIIRDDKTPRGTRIFGPVARELREGGYMKIVSLAPEVL</sequence>
<protein>
    <recommendedName>
        <fullName evidence="1">Large ribosomal subunit protein uL14</fullName>
    </recommendedName>
    <alternativeName>
        <fullName evidence="2">50S ribosomal protein L14</fullName>
    </alternativeName>
</protein>
<gene>
    <name evidence="1" type="primary">rplN</name>
    <name type="ordered locus">SEQ_0065</name>
</gene>
<reference key="1">
    <citation type="journal article" date="2009" name="PLoS Pathog.">
        <title>Genomic evidence for the evolution of Streptococcus equi: host restriction, increased virulence, and genetic exchange with human pathogens.</title>
        <authorList>
            <person name="Holden M.T.G."/>
            <person name="Heather Z."/>
            <person name="Paillot R."/>
            <person name="Steward K.F."/>
            <person name="Webb K."/>
            <person name="Ainslie F."/>
            <person name="Jourdan T."/>
            <person name="Bason N.C."/>
            <person name="Holroyd N.E."/>
            <person name="Mungall K."/>
            <person name="Quail M.A."/>
            <person name="Sanders M."/>
            <person name="Simmonds M."/>
            <person name="Willey D."/>
            <person name="Brooks K."/>
            <person name="Aanensen D.M."/>
            <person name="Spratt B.G."/>
            <person name="Jolley K.A."/>
            <person name="Maiden M.C.J."/>
            <person name="Kehoe M."/>
            <person name="Chanter N."/>
            <person name="Bentley S.D."/>
            <person name="Robinson C."/>
            <person name="Maskell D.J."/>
            <person name="Parkhill J."/>
            <person name="Waller A.S."/>
        </authorList>
    </citation>
    <scope>NUCLEOTIDE SEQUENCE [LARGE SCALE GENOMIC DNA]</scope>
    <source>
        <strain>4047</strain>
    </source>
</reference>
<keyword id="KW-0687">Ribonucleoprotein</keyword>
<keyword id="KW-0689">Ribosomal protein</keyword>
<keyword id="KW-0694">RNA-binding</keyword>
<keyword id="KW-0699">rRNA-binding</keyword>
<organism>
    <name type="scientific">Streptococcus equi subsp. equi (strain 4047)</name>
    <dbReference type="NCBI Taxonomy" id="553482"/>
    <lineage>
        <taxon>Bacteria</taxon>
        <taxon>Bacillati</taxon>
        <taxon>Bacillota</taxon>
        <taxon>Bacilli</taxon>
        <taxon>Lactobacillales</taxon>
        <taxon>Streptococcaceae</taxon>
        <taxon>Streptococcus</taxon>
    </lineage>
</organism>
<accession>C0M9H1</accession>
<evidence type="ECO:0000255" key="1">
    <source>
        <dbReference type="HAMAP-Rule" id="MF_01367"/>
    </source>
</evidence>
<evidence type="ECO:0000305" key="2"/>
<comment type="function">
    <text evidence="1">Binds to 23S rRNA. Forms part of two intersubunit bridges in the 70S ribosome.</text>
</comment>
<comment type="subunit">
    <text evidence="1">Part of the 50S ribosomal subunit. Forms a cluster with proteins L3 and L19. In the 70S ribosome, L14 and L19 interact and together make contacts with the 16S rRNA in bridges B5 and B8.</text>
</comment>
<comment type="similarity">
    <text evidence="1">Belongs to the universal ribosomal protein uL14 family.</text>
</comment>
<proteinExistence type="inferred from homology"/>
<dbReference type="EMBL" id="FM204883">
    <property type="protein sequence ID" value="CAW91985.1"/>
    <property type="molecule type" value="Genomic_DNA"/>
</dbReference>
<dbReference type="RefSeq" id="WP_012514740.1">
    <property type="nucleotide sequence ID" value="NC_012471.1"/>
</dbReference>
<dbReference type="SMR" id="C0M9H1"/>
<dbReference type="GeneID" id="83703914"/>
<dbReference type="KEGG" id="seu:SEQ_0065"/>
<dbReference type="HOGENOM" id="CLU_095071_2_1_9"/>
<dbReference type="OrthoDB" id="9806379at2"/>
<dbReference type="Proteomes" id="UP000001365">
    <property type="component" value="Chromosome"/>
</dbReference>
<dbReference type="GO" id="GO:0022625">
    <property type="term" value="C:cytosolic large ribosomal subunit"/>
    <property type="evidence" value="ECO:0007669"/>
    <property type="project" value="TreeGrafter"/>
</dbReference>
<dbReference type="GO" id="GO:0070180">
    <property type="term" value="F:large ribosomal subunit rRNA binding"/>
    <property type="evidence" value="ECO:0007669"/>
    <property type="project" value="TreeGrafter"/>
</dbReference>
<dbReference type="GO" id="GO:0003735">
    <property type="term" value="F:structural constituent of ribosome"/>
    <property type="evidence" value="ECO:0007669"/>
    <property type="project" value="InterPro"/>
</dbReference>
<dbReference type="GO" id="GO:0006412">
    <property type="term" value="P:translation"/>
    <property type="evidence" value="ECO:0007669"/>
    <property type="project" value="UniProtKB-UniRule"/>
</dbReference>
<dbReference type="CDD" id="cd00337">
    <property type="entry name" value="Ribosomal_uL14"/>
    <property type="match status" value="1"/>
</dbReference>
<dbReference type="FunFam" id="2.40.150.20:FF:000001">
    <property type="entry name" value="50S ribosomal protein L14"/>
    <property type="match status" value="1"/>
</dbReference>
<dbReference type="Gene3D" id="2.40.150.20">
    <property type="entry name" value="Ribosomal protein L14"/>
    <property type="match status" value="1"/>
</dbReference>
<dbReference type="HAMAP" id="MF_01367">
    <property type="entry name" value="Ribosomal_uL14"/>
    <property type="match status" value="1"/>
</dbReference>
<dbReference type="InterPro" id="IPR000218">
    <property type="entry name" value="Ribosomal_uL14"/>
</dbReference>
<dbReference type="InterPro" id="IPR005745">
    <property type="entry name" value="Ribosomal_uL14_bac-type"/>
</dbReference>
<dbReference type="InterPro" id="IPR019972">
    <property type="entry name" value="Ribosomal_uL14_CS"/>
</dbReference>
<dbReference type="InterPro" id="IPR036853">
    <property type="entry name" value="Ribosomal_uL14_sf"/>
</dbReference>
<dbReference type="NCBIfam" id="TIGR01067">
    <property type="entry name" value="rplN_bact"/>
    <property type="match status" value="1"/>
</dbReference>
<dbReference type="PANTHER" id="PTHR11761">
    <property type="entry name" value="50S/60S RIBOSOMAL PROTEIN L14/L23"/>
    <property type="match status" value="1"/>
</dbReference>
<dbReference type="PANTHER" id="PTHR11761:SF3">
    <property type="entry name" value="LARGE RIBOSOMAL SUBUNIT PROTEIN UL14M"/>
    <property type="match status" value="1"/>
</dbReference>
<dbReference type="Pfam" id="PF00238">
    <property type="entry name" value="Ribosomal_L14"/>
    <property type="match status" value="1"/>
</dbReference>
<dbReference type="SMART" id="SM01374">
    <property type="entry name" value="Ribosomal_L14"/>
    <property type="match status" value="1"/>
</dbReference>
<dbReference type="SUPFAM" id="SSF50193">
    <property type="entry name" value="Ribosomal protein L14"/>
    <property type="match status" value="1"/>
</dbReference>
<dbReference type="PROSITE" id="PS00049">
    <property type="entry name" value="RIBOSOMAL_L14"/>
    <property type="match status" value="1"/>
</dbReference>